<keyword id="KW-0961">Cell wall biogenesis/degradation</keyword>
<keyword id="KW-0548">Nucleotidyltransferase</keyword>
<keyword id="KW-1185">Reference proteome</keyword>
<keyword id="KW-0777">Teichoic acid biosynthesis</keyword>
<keyword id="KW-0808">Transferase</keyword>
<organism>
    <name type="scientific">Staphylococcus epidermidis (strain ATCC 35984 / DSM 28319 / BCRC 17069 / CCUG 31568 / BM 3577 / RP62A)</name>
    <dbReference type="NCBI Taxonomy" id="176279"/>
    <lineage>
        <taxon>Bacteria</taxon>
        <taxon>Bacillati</taxon>
        <taxon>Bacillota</taxon>
        <taxon>Bacilli</taxon>
        <taxon>Bacillales</taxon>
        <taxon>Staphylococcaceae</taxon>
        <taxon>Staphylococcus</taxon>
    </lineage>
</organism>
<gene>
    <name evidence="1" type="primary">tarI</name>
    <name type="ordered locus">SERP0196</name>
</gene>
<feature type="chain" id="PRO_0000075626" description="Ribitol-5-phosphate cytidylyltransferase">
    <location>
        <begin position="1"/>
        <end position="238"/>
    </location>
</feature>
<feature type="binding site" evidence="1">
    <location>
        <begin position="7"/>
        <end position="10"/>
    </location>
    <ligand>
        <name>CTP</name>
        <dbReference type="ChEBI" id="CHEBI:37563"/>
    </ligand>
</feature>
<feature type="binding site" evidence="1">
    <location>
        <begin position="81"/>
        <end position="87"/>
    </location>
    <ligand>
        <name>CTP</name>
        <dbReference type="ChEBI" id="CHEBI:37563"/>
    </ligand>
</feature>
<feature type="site" description="Transition state stabilizer" evidence="1">
    <location>
        <position position="14"/>
    </location>
</feature>
<feature type="site" description="Transition state stabilizer" evidence="1">
    <location>
        <position position="22"/>
    </location>
</feature>
<feature type="site" description="Positions ribitol 5-phosphate for the nucleophilic attack" evidence="1">
    <location>
        <position position="160"/>
    </location>
</feature>
<feature type="site" description="Positions ribitol 5-phosphate for the nucleophilic attack" evidence="1">
    <location>
        <position position="217"/>
    </location>
</feature>
<reference key="1">
    <citation type="journal article" date="2005" name="J. Bacteriol.">
        <title>Insights on evolution of virulence and resistance from the complete genome analysis of an early methicillin-resistant Staphylococcus aureus strain and a biofilm-producing methicillin-resistant Staphylococcus epidermidis strain.</title>
        <authorList>
            <person name="Gill S.R."/>
            <person name="Fouts D.E."/>
            <person name="Archer G.L."/>
            <person name="Mongodin E.F."/>
            <person name="DeBoy R.T."/>
            <person name="Ravel J."/>
            <person name="Paulsen I.T."/>
            <person name="Kolonay J.F."/>
            <person name="Brinkac L.M."/>
            <person name="Beanan M.J."/>
            <person name="Dodson R.J."/>
            <person name="Daugherty S.C."/>
            <person name="Madupu R."/>
            <person name="Angiuoli S.V."/>
            <person name="Durkin A.S."/>
            <person name="Haft D.H."/>
            <person name="Vamathevan J.J."/>
            <person name="Khouri H."/>
            <person name="Utterback T.R."/>
            <person name="Lee C."/>
            <person name="Dimitrov G."/>
            <person name="Jiang L."/>
            <person name="Qin H."/>
            <person name="Weidman J."/>
            <person name="Tran K."/>
            <person name="Kang K.H."/>
            <person name="Hance I.R."/>
            <person name="Nelson K.E."/>
            <person name="Fraser C.M."/>
        </authorList>
    </citation>
    <scope>NUCLEOTIDE SEQUENCE [LARGE SCALE GENOMIC DNA]</scope>
    <source>
        <strain>ATCC 35984 / DSM 28319 / BCRC 17069 / CCUG 31568 / BM 3577 / RP62A</strain>
    </source>
</reference>
<sequence length="238" mass="26963">MIYAGILAGGIGSRMGNVPLPKQFLLLQGKPIIIHTVEKFLMYKDFDEIIIATPQKWINYMHDLLNNYRLDDKKIKVIQGGDDRNHTIMNIIESIEQHKKLNDEDIIVTHDAVRPFLTNRIIRENVEYASQYGAVDTVVNAVDTIISSNDAQFISEIPIRSEMYQGQTPQTFKIKELKDSYLSLTQSQKEILTDACKILVELGKPVKLVKGELFNIKITTPYDLKVANSIITGAVDND</sequence>
<protein>
    <recommendedName>
        <fullName evidence="1">Ribitol-5-phosphate cytidylyltransferase</fullName>
        <ecNumber evidence="1">2.7.7.40</ecNumber>
    </recommendedName>
</protein>
<proteinExistence type="inferred from homology"/>
<comment type="function">
    <text evidence="1">Catalyzes the transfer of the cytidylyl group of CTP to D-ribitol 5-phosphate.</text>
</comment>
<comment type="catalytic activity">
    <reaction evidence="1">
        <text>D-ribitol 5-phosphate + CTP + H(+) = CDP-L-ribitol + diphosphate</text>
        <dbReference type="Rhea" id="RHEA:12456"/>
        <dbReference type="ChEBI" id="CHEBI:15378"/>
        <dbReference type="ChEBI" id="CHEBI:33019"/>
        <dbReference type="ChEBI" id="CHEBI:37563"/>
        <dbReference type="ChEBI" id="CHEBI:57608"/>
        <dbReference type="ChEBI" id="CHEBI:57695"/>
        <dbReference type="EC" id="2.7.7.40"/>
    </reaction>
</comment>
<comment type="pathway">
    <text evidence="1">Cell wall biogenesis; poly(ribitol phosphate) teichoic acid biosynthesis.</text>
</comment>
<comment type="similarity">
    <text evidence="1">Belongs to the IspD/TarI cytidylyltransferase family. TarI subfamily.</text>
</comment>
<accession>Q5HRJ7</accession>
<evidence type="ECO:0000255" key="1">
    <source>
        <dbReference type="HAMAP-Rule" id="MF_02068"/>
    </source>
</evidence>
<name>TARI_STAEQ</name>
<dbReference type="EC" id="2.7.7.40" evidence="1"/>
<dbReference type="EMBL" id="CP000029">
    <property type="protein sequence ID" value="AAW53609.1"/>
    <property type="molecule type" value="Genomic_DNA"/>
</dbReference>
<dbReference type="RefSeq" id="WP_002445744.1">
    <property type="nucleotide sequence ID" value="NC_002976.3"/>
</dbReference>
<dbReference type="SMR" id="Q5HRJ7"/>
<dbReference type="STRING" id="176279.SERP0196"/>
<dbReference type="KEGG" id="ser:SERP0196"/>
<dbReference type="eggNOG" id="COG1211">
    <property type="taxonomic scope" value="Bacteria"/>
</dbReference>
<dbReference type="HOGENOM" id="CLU_061281_2_3_9"/>
<dbReference type="UniPathway" id="UPA00790"/>
<dbReference type="Proteomes" id="UP000000531">
    <property type="component" value="Chromosome"/>
</dbReference>
<dbReference type="GO" id="GO:0050518">
    <property type="term" value="F:2-C-methyl-D-erythritol 4-phosphate cytidylyltransferase activity"/>
    <property type="evidence" value="ECO:0007669"/>
    <property type="project" value="TreeGrafter"/>
</dbReference>
<dbReference type="GO" id="GO:0047349">
    <property type="term" value="F:D-ribitol-5-phosphate cytidylyltransferase activity"/>
    <property type="evidence" value="ECO:0007669"/>
    <property type="project" value="UniProtKB-UniRule"/>
</dbReference>
<dbReference type="GO" id="GO:0071555">
    <property type="term" value="P:cell wall organization"/>
    <property type="evidence" value="ECO:0007669"/>
    <property type="project" value="UniProtKB-KW"/>
</dbReference>
<dbReference type="GO" id="GO:0008299">
    <property type="term" value="P:isoprenoid biosynthetic process"/>
    <property type="evidence" value="ECO:0007669"/>
    <property type="project" value="InterPro"/>
</dbReference>
<dbReference type="GO" id="GO:1902012">
    <property type="term" value="P:poly(ribitol phosphate) teichoic acid biosynthetic process"/>
    <property type="evidence" value="ECO:0007669"/>
    <property type="project" value="UniProtKB-UniRule"/>
</dbReference>
<dbReference type="CDD" id="cd02516">
    <property type="entry name" value="CDP-ME_synthetase"/>
    <property type="match status" value="1"/>
</dbReference>
<dbReference type="FunFam" id="3.90.550.10:FF:000003">
    <property type="entry name" value="2-C-methyl-D-erythritol 4-phosphate cytidylyltransferase"/>
    <property type="match status" value="1"/>
</dbReference>
<dbReference type="Gene3D" id="3.90.550.10">
    <property type="entry name" value="Spore Coat Polysaccharide Biosynthesis Protein SpsA, Chain A"/>
    <property type="match status" value="1"/>
</dbReference>
<dbReference type="HAMAP" id="MF_02068">
    <property type="entry name" value="TarI"/>
    <property type="match status" value="1"/>
</dbReference>
<dbReference type="InterPro" id="IPR034683">
    <property type="entry name" value="IspD/TarI"/>
</dbReference>
<dbReference type="InterPro" id="IPR050088">
    <property type="entry name" value="IspD/TarI_cytidylyltransf_bact"/>
</dbReference>
<dbReference type="InterPro" id="IPR018294">
    <property type="entry name" value="ISPD_synthase_CS"/>
</dbReference>
<dbReference type="InterPro" id="IPR029044">
    <property type="entry name" value="Nucleotide-diphossugar_trans"/>
</dbReference>
<dbReference type="InterPro" id="IPR034709">
    <property type="entry name" value="TarI"/>
</dbReference>
<dbReference type="NCBIfam" id="NF001183">
    <property type="entry name" value="PRK00155.1-3"/>
    <property type="match status" value="1"/>
</dbReference>
<dbReference type="PANTHER" id="PTHR32125">
    <property type="entry name" value="2-C-METHYL-D-ERYTHRITOL 4-PHOSPHATE CYTIDYLYLTRANSFERASE, CHLOROPLASTIC"/>
    <property type="match status" value="1"/>
</dbReference>
<dbReference type="PANTHER" id="PTHR32125:SF8">
    <property type="entry name" value="RIBITOL-5-PHOSPHATE CYTIDYLYLTRANSFERASE"/>
    <property type="match status" value="1"/>
</dbReference>
<dbReference type="Pfam" id="PF01128">
    <property type="entry name" value="IspD"/>
    <property type="match status" value="1"/>
</dbReference>
<dbReference type="SUPFAM" id="SSF53448">
    <property type="entry name" value="Nucleotide-diphospho-sugar transferases"/>
    <property type="match status" value="1"/>
</dbReference>
<dbReference type="PROSITE" id="PS01295">
    <property type="entry name" value="ISPD"/>
    <property type="match status" value="1"/>
</dbReference>